<organism>
    <name type="scientific">Salmonella heidelberg (strain SL476)</name>
    <dbReference type="NCBI Taxonomy" id="454169"/>
    <lineage>
        <taxon>Bacteria</taxon>
        <taxon>Pseudomonadati</taxon>
        <taxon>Pseudomonadota</taxon>
        <taxon>Gammaproteobacteria</taxon>
        <taxon>Enterobacterales</taxon>
        <taxon>Enterobacteriaceae</taxon>
        <taxon>Salmonella</taxon>
    </lineage>
</organism>
<proteinExistence type="inferred from homology"/>
<name>PURA_SALHS</name>
<gene>
    <name evidence="1" type="primary">purA</name>
    <name type="ordered locus">SeHA_C4784</name>
</gene>
<reference key="1">
    <citation type="journal article" date="2011" name="J. Bacteriol.">
        <title>Comparative genomics of 28 Salmonella enterica isolates: evidence for CRISPR-mediated adaptive sublineage evolution.</title>
        <authorList>
            <person name="Fricke W.F."/>
            <person name="Mammel M.K."/>
            <person name="McDermott P.F."/>
            <person name="Tartera C."/>
            <person name="White D.G."/>
            <person name="Leclerc J.E."/>
            <person name="Ravel J."/>
            <person name="Cebula T.A."/>
        </authorList>
    </citation>
    <scope>NUCLEOTIDE SEQUENCE [LARGE SCALE GENOMIC DNA]</scope>
    <source>
        <strain>SL476</strain>
    </source>
</reference>
<sequence length="432" mass="47361">MGNNVVVLGTQWGDEGKGKIVDLLTERAKYVVRYQGGHNAGHTLVINGEKTVLHLIPSGILRENVTSIIGNGVVLSPAALMKEMKELEDRGIPVRERLLLSEACPLILDYHVALDNAREKARGAKAIGTTGRGIGPAYEDKVARRGLRVGDLFDKETFAEKLKEVMEYHNFQLVNYYKAEAVDYQKVLDDTMAVADILTSMVVDVSDLLDQARQRGDFVMFEGAQGTLLDIDHGTYPYVTSSNTTAGGVATGSGLGPRYVDYVLGILKAYSTRVGAGPFPTELFDETGEFLCKQGNEYGATTGRRRRTGWLDTVAVRRAVQLNSLSGFCLTKLDVLDGLKEVKLCVAYRMPDGREVTTTPLAADDWKGVEPIYETMPGWSESTFGVKDRSGLPQAALNYIKRIEELTGVPIDIISTGPDRTETMILRDPFDA</sequence>
<comment type="function">
    <text evidence="1">Plays an important role in the de novo pathway of purine nucleotide biosynthesis. Catalyzes the first committed step in the biosynthesis of AMP from IMP.</text>
</comment>
<comment type="catalytic activity">
    <reaction evidence="1">
        <text>IMP + L-aspartate + GTP = N(6)-(1,2-dicarboxyethyl)-AMP + GDP + phosphate + 2 H(+)</text>
        <dbReference type="Rhea" id="RHEA:15753"/>
        <dbReference type="ChEBI" id="CHEBI:15378"/>
        <dbReference type="ChEBI" id="CHEBI:29991"/>
        <dbReference type="ChEBI" id="CHEBI:37565"/>
        <dbReference type="ChEBI" id="CHEBI:43474"/>
        <dbReference type="ChEBI" id="CHEBI:57567"/>
        <dbReference type="ChEBI" id="CHEBI:58053"/>
        <dbReference type="ChEBI" id="CHEBI:58189"/>
        <dbReference type="EC" id="6.3.4.4"/>
    </reaction>
</comment>
<comment type="cofactor">
    <cofactor evidence="1">
        <name>Mg(2+)</name>
        <dbReference type="ChEBI" id="CHEBI:18420"/>
    </cofactor>
    <text evidence="1">Binds 1 Mg(2+) ion per subunit.</text>
</comment>
<comment type="pathway">
    <text evidence="1">Purine metabolism; AMP biosynthesis via de novo pathway; AMP from IMP: step 1/2.</text>
</comment>
<comment type="subunit">
    <text evidence="1">Homodimer.</text>
</comment>
<comment type="subcellular location">
    <subcellularLocation>
        <location evidence="1">Cytoplasm</location>
    </subcellularLocation>
</comment>
<comment type="similarity">
    <text evidence="1">Belongs to the adenylosuccinate synthetase family.</text>
</comment>
<dbReference type="EC" id="6.3.4.4" evidence="1"/>
<dbReference type="EMBL" id="CP001120">
    <property type="protein sequence ID" value="ACF70119.1"/>
    <property type="molecule type" value="Genomic_DNA"/>
</dbReference>
<dbReference type="RefSeq" id="WP_000527960.1">
    <property type="nucleotide sequence ID" value="NC_011083.1"/>
</dbReference>
<dbReference type="SMR" id="B4TFB1"/>
<dbReference type="KEGG" id="seh:SeHA_C4784"/>
<dbReference type="HOGENOM" id="CLU_029848_0_0_6"/>
<dbReference type="UniPathway" id="UPA00075">
    <property type="reaction ID" value="UER00335"/>
</dbReference>
<dbReference type="Proteomes" id="UP000001866">
    <property type="component" value="Chromosome"/>
</dbReference>
<dbReference type="GO" id="GO:0005737">
    <property type="term" value="C:cytoplasm"/>
    <property type="evidence" value="ECO:0007669"/>
    <property type="project" value="UniProtKB-SubCell"/>
</dbReference>
<dbReference type="GO" id="GO:0004019">
    <property type="term" value="F:adenylosuccinate synthase activity"/>
    <property type="evidence" value="ECO:0007669"/>
    <property type="project" value="UniProtKB-UniRule"/>
</dbReference>
<dbReference type="GO" id="GO:0005525">
    <property type="term" value="F:GTP binding"/>
    <property type="evidence" value="ECO:0007669"/>
    <property type="project" value="UniProtKB-UniRule"/>
</dbReference>
<dbReference type="GO" id="GO:0000287">
    <property type="term" value="F:magnesium ion binding"/>
    <property type="evidence" value="ECO:0007669"/>
    <property type="project" value="UniProtKB-UniRule"/>
</dbReference>
<dbReference type="GO" id="GO:0044208">
    <property type="term" value="P:'de novo' AMP biosynthetic process"/>
    <property type="evidence" value="ECO:0007669"/>
    <property type="project" value="UniProtKB-UniRule"/>
</dbReference>
<dbReference type="GO" id="GO:0046040">
    <property type="term" value="P:IMP metabolic process"/>
    <property type="evidence" value="ECO:0007669"/>
    <property type="project" value="TreeGrafter"/>
</dbReference>
<dbReference type="CDD" id="cd03108">
    <property type="entry name" value="AdSS"/>
    <property type="match status" value="1"/>
</dbReference>
<dbReference type="FunFam" id="1.10.300.10:FF:000001">
    <property type="entry name" value="Adenylosuccinate synthetase"/>
    <property type="match status" value="1"/>
</dbReference>
<dbReference type="FunFam" id="3.90.170.10:FF:000001">
    <property type="entry name" value="Adenylosuccinate synthetase"/>
    <property type="match status" value="1"/>
</dbReference>
<dbReference type="Gene3D" id="3.40.440.10">
    <property type="entry name" value="Adenylosuccinate Synthetase, subunit A, domain 1"/>
    <property type="match status" value="1"/>
</dbReference>
<dbReference type="Gene3D" id="1.10.300.10">
    <property type="entry name" value="Adenylosuccinate Synthetase, subunit A, domain 2"/>
    <property type="match status" value="1"/>
</dbReference>
<dbReference type="Gene3D" id="3.90.170.10">
    <property type="entry name" value="Adenylosuccinate Synthetase, subunit A, domain 3"/>
    <property type="match status" value="1"/>
</dbReference>
<dbReference type="HAMAP" id="MF_00011">
    <property type="entry name" value="Adenylosucc_synth"/>
    <property type="match status" value="1"/>
</dbReference>
<dbReference type="InterPro" id="IPR018220">
    <property type="entry name" value="Adenylosuccin_syn_GTP-bd"/>
</dbReference>
<dbReference type="InterPro" id="IPR033128">
    <property type="entry name" value="Adenylosuccin_syn_Lys_AS"/>
</dbReference>
<dbReference type="InterPro" id="IPR042109">
    <property type="entry name" value="Adenylosuccinate_synth_dom1"/>
</dbReference>
<dbReference type="InterPro" id="IPR042110">
    <property type="entry name" value="Adenylosuccinate_synth_dom2"/>
</dbReference>
<dbReference type="InterPro" id="IPR042111">
    <property type="entry name" value="Adenylosuccinate_synth_dom3"/>
</dbReference>
<dbReference type="InterPro" id="IPR001114">
    <property type="entry name" value="Adenylosuccinate_synthetase"/>
</dbReference>
<dbReference type="InterPro" id="IPR027417">
    <property type="entry name" value="P-loop_NTPase"/>
</dbReference>
<dbReference type="NCBIfam" id="NF002223">
    <property type="entry name" value="PRK01117.1"/>
    <property type="match status" value="1"/>
</dbReference>
<dbReference type="NCBIfam" id="TIGR00184">
    <property type="entry name" value="purA"/>
    <property type="match status" value="1"/>
</dbReference>
<dbReference type="PANTHER" id="PTHR11846">
    <property type="entry name" value="ADENYLOSUCCINATE SYNTHETASE"/>
    <property type="match status" value="1"/>
</dbReference>
<dbReference type="PANTHER" id="PTHR11846:SF0">
    <property type="entry name" value="ADENYLOSUCCINATE SYNTHETASE"/>
    <property type="match status" value="1"/>
</dbReference>
<dbReference type="Pfam" id="PF00709">
    <property type="entry name" value="Adenylsucc_synt"/>
    <property type="match status" value="1"/>
</dbReference>
<dbReference type="SMART" id="SM00788">
    <property type="entry name" value="Adenylsucc_synt"/>
    <property type="match status" value="1"/>
</dbReference>
<dbReference type="SUPFAM" id="SSF52540">
    <property type="entry name" value="P-loop containing nucleoside triphosphate hydrolases"/>
    <property type="match status" value="1"/>
</dbReference>
<dbReference type="PROSITE" id="PS01266">
    <property type="entry name" value="ADENYLOSUCCIN_SYN_1"/>
    <property type="match status" value="1"/>
</dbReference>
<dbReference type="PROSITE" id="PS00513">
    <property type="entry name" value="ADENYLOSUCCIN_SYN_2"/>
    <property type="match status" value="1"/>
</dbReference>
<evidence type="ECO:0000255" key="1">
    <source>
        <dbReference type="HAMAP-Rule" id="MF_00011"/>
    </source>
</evidence>
<feature type="chain" id="PRO_1000089336" description="Adenylosuccinate synthetase">
    <location>
        <begin position="1"/>
        <end position="432"/>
    </location>
</feature>
<feature type="active site" description="Proton acceptor" evidence="1">
    <location>
        <position position="14"/>
    </location>
</feature>
<feature type="active site" description="Proton donor" evidence="1">
    <location>
        <position position="42"/>
    </location>
</feature>
<feature type="binding site" evidence="1">
    <location>
        <begin position="13"/>
        <end position="19"/>
    </location>
    <ligand>
        <name>GTP</name>
        <dbReference type="ChEBI" id="CHEBI:37565"/>
    </ligand>
</feature>
<feature type="binding site" description="in other chain" evidence="1">
    <location>
        <begin position="14"/>
        <end position="17"/>
    </location>
    <ligand>
        <name>IMP</name>
        <dbReference type="ChEBI" id="CHEBI:58053"/>
        <note>ligand shared between dimeric partners</note>
    </ligand>
</feature>
<feature type="binding site" evidence="1">
    <location>
        <position position="14"/>
    </location>
    <ligand>
        <name>Mg(2+)</name>
        <dbReference type="ChEBI" id="CHEBI:18420"/>
    </ligand>
</feature>
<feature type="binding site" description="in other chain" evidence="1">
    <location>
        <begin position="39"/>
        <end position="42"/>
    </location>
    <ligand>
        <name>IMP</name>
        <dbReference type="ChEBI" id="CHEBI:58053"/>
        <note>ligand shared between dimeric partners</note>
    </ligand>
</feature>
<feature type="binding site" evidence="1">
    <location>
        <begin position="41"/>
        <end position="43"/>
    </location>
    <ligand>
        <name>GTP</name>
        <dbReference type="ChEBI" id="CHEBI:37565"/>
    </ligand>
</feature>
<feature type="binding site" evidence="1">
    <location>
        <position position="41"/>
    </location>
    <ligand>
        <name>Mg(2+)</name>
        <dbReference type="ChEBI" id="CHEBI:18420"/>
    </ligand>
</feature>
<feature type="binding site" description="in other chain" evidence="1">
    <location>
        <position position="130"/>
    </location>
    <ligand>
        <name>IMP</name>
        <dbReference type="ChEBI" id="CHEBI:58053"/>
        <note>ligand shared between dimeric partners</note>
    </ligand>
</feature>
<feature type="binding site" evidence="1">
    <location>
        <position position="144"/>
    </location>
    <ligand>
        <name>IMP</name>
        <dbReference type="ChEBI" id="CHEBI:58053"/>
        <note>ligand shared between dimeric partners</note>
    </ligand>
</feature>
<feature type="binding site" description="in other chain" evidence="1">
    <location>
        <position position="225"/>
    </location>
    <ligand>
        <name>IMP</name>
        <dbReference type="ChEBI" id="CHEBI:58053"/>
        <note>ligand shared between dimeric partners</note>
    </ligand>
</feature>
<feature type="binding site" description="in other chain" evidence="1">
    <location>
        <position position="240"/>
    </location>
    <ligand>
        <name>IMP</name>
        <dbReference type="ChEBI" id="CHEBI:58053"/>
        <note>ligand shared between dimeric partners</note>
    </ligand>
</feature>
<feature type="binding site" evidence="1">
    <location>
        <begin position="300"/>
        <end position="306"/>
    </location>
    <ligand>
        <name>substrate</name>
    </ligand>
</feature>
<feature type="binding site" description="in other chain" evidence="1">
    <location>
        <position position="304"/>
    </location>
    <ligand>
        <name>IMP</name>
        <dbReference type="ChEBI" id="CHEBI:58053"/>
        <note>ligand shared between dimeric partners</note>
    </ligand>
</feature>
<feature type="binding site" evidence="1">
    <location>
        <position position="306"/>
    </location>
    <ligand>
        <name>GTP</name>
        <dbReference type="ChEBI" id="CHEBI:37565"/>
    </ligand>
</feature>
<feature type="binding site" evidence="1">
    <location>
        <begin position="332"/>
        <end position="334"/>
    </location>
    <ligand>
        <name>GTP</name>
        <dbReference type="ChEBI" id="CHEBI:37565"/>
    </ligand>
</feature>
<feature type="binding site" evidence="1">
    <location>
        <begin position="415"/>
        <end position="417"/>
    </location>
    <ligand>
        <name>GTP</name>
        <dbReference type="ChEBI" id="CHEBI:37565"/>
    </ligand>
</feature>
<accession>B4TFB1</accession>
<keyword id="KW-0963">Cytoplasm</keyword>
<keyword id="KW-0342">GTP-binding</keyword>
<keyword id="KW-0436">Ligase</keyword>
<keyword id="KW-0460">Magnesium</keyword>
<keyword id="KW-0479">Metal-binding</keyword>
<keyword id="KW-0547">Nucleotide-binding</keyword>
<keyword id="KW-0658">Purine biosynthesis</keyword>
<protein>
    <recommendedName>
        <fullName evidence="1">Adenylosuccinate synthetase</fullName>
        <shortName evidence="1">AMPSase</shortName>
        <shortName evidence="1">AdSS</shortName>
        <ecNumber evidence="1">6.3.4.4</ecNumber>
    </recommendedName>
    <alternativeName>
        <fullName evidence="1">IMP--aspartate ligase</fullName>
    </alternativeName>
</protein>